<organism>
    <name type="scientific">Escherichia coli O6:H1 (strain CFT073 / ATCC 700928 / UPEC)</name>
    <dbReference type="NCBI Taxonomy" id="199310"/>
    <lineage>
        <taxon>Bacteria</taxon>
        <taxon>Pseudomonadati</taxon>
        <taxon>Pseudomonadota</taxon>
        <taxon>Gammaproteobacteria</taxon>
        <taxon>Enterobacterales</taxon>
        <taxon>Enterobacteriaceae</taxon>
        <taxon>Escherichia</taxon>
    </lineage>
</organism>
<dbReference type="EMBL" id="AE014075">
    <property type="protein sequence ID" value="AAN79509.1"/>
    <property type="molecule type" value="Genomic_DNA"/>
</dbReference>
<dbReference type="RefSeq" id="WP_000109282.1">
    <property type="nucleotide sequence ID" value="NZ_CP051263.1"/>
</dbReference>
<dbReference type="SMR" id="Q8FJC1"/>
<dbReference type="STRING" id="199310.c1037"/>
<dbReference type="KEGG" id="ecc:c1037"/>
<dbReference type="eggNOG" id="COG0477">
    <property type="taxonomic scope" value="Bacteria"/>
</dbReference>
<dbReference type="HOGENOM" id="CLU_035018_1_2_6"/>
<dbReference type="BioCyc" id="ECOL199310:C1037-MONOMER"/>
<dbReference type="Proteomes" id="UP000001410">
    <property type="component" value="Chromosome"/>
</dbReference>
<dbReference type="GO" id="GO:0005886">
    <property type="term" value="C:plasma membrane"/>
    <property type="evidence" value="ECO:0007669"/>
    <property type="project" value="UniProtKB-SubCell"/>
</dbReference>
<dbReference type="GO" id="GO:0022857">
    <property type="term" value="F:transmembrane transporter activity"/>
    <property type="evidence" value="ECO:0007669"/>
    <property type="project" value="UniProtKB-UniRule"/>
</dbReference>
<dbReference type="CDD" id="cd17477">
    <property type="entry name" value="MFS_YcaD_like"/>
    <property type="match status" value="1"/>
</dbReference>
<dbReference type="FunFam" id="1.20.1250.20:FF:000041">
    <property type="entry name" value="Uncharacterized MFS-type transporter YcaD"/>
    <property type="match status" value="1"/>
</dbReference>
<dbReference type="FunFam" id="1.20.1250.20:FF:000066">
    <property type="entry name" value="Uncharacterized MFS-type transporter YcaD"/>
    <property type="match status" value="1"/>
</dbReference>
<dbReference type="Gene3D" id="1.20.1250.20">
    <property type="entry name" value="MFS general substrate transporter like domains"/>
    <property type="match status" value="2"/>
</dbReference>
<dbReference type="HAMAP" id="MF_01149">
    <property type="entry name" value="MFS_YcaD"/>
    <property type="match status" value="1"/>
</dbReference>
<dbReference type="InterPro" id="IPR011701">
    <property type="entry name" value="MFS"/>
</dbReference>
<dbReference type="InterPro" id="IPR020846">
    <property type="entry name" value="MFS_dom"/>
</dbReference>
<dbReference type="InterPro" id="IPR036259">
    <property type="entry name" value="MFS_trans_sf"/>
</dbReference>
<dbReference type="InterPro" id="IPR023745">
    <property type="entry name" value="MFS_YcaD"/>
</dbReference>
<dbReference type="InterPro" id="IPR047200">
    <property type="entry name" value="MFS_YcaD-like"/>
</dbReference>
<dbReference type="NCBIfam" id="NF002962">
    <property type="entry name" value="PRK03633.1"/>
    <property type="match status" value="1"/>
</dbReference>
<dbReference type="PANTHER" id="PTHR23521">
    <property type="entry name" value="TRANSPORTER MFS SUPERFAMILY"/>
    <property type="match status" value="1"/>
</dbReference>
<dbReference type="PANTHER" id="PTHR23521:SF2">
    <property type="entry name" value="TRANSPORTER MFS SUPERFAMILY"/>
    <property type="match status" value="1"/>
</dbReference>
<dbReference type="Pfam" id="PF07690">
    <property type="entry name" value="MFS_1"/>
    <property type="match status" value="1"/>
</dbReference>
<dbReference type="SUPFAM" id="SSF103473">
    <property type="entry name" value="MFS general substrate transporter"/>
    <property type="match status" value="1"/>
</dbReference>
<dbReference type="PROSITE" id="PS50850">
    <property type="entry name" value="MFS"/>
    <property type="match status" value="1"/>
</dbReference>
<evidence type="ECO:0000250" key="1"/>
<evidence type="ECO:0000255" key="2"/>
<evidence type="ECO:0000305" key="3"/>
<proteinExistence type="inferred from homology"/>
<name>YCAD_ECOL6</name>
<accession>Q8FJC1</accession>
<feature type="chain" id="PRO_0000084891" description="Uncharacterized MFS-type transporter YcaD">
    <location>
        <begin position="1"/>
        <end position="382"/>
    </location>
</feature>
<feature type="topological domain" description="Cytoplasmic" evidence="2">
    <location>
        <begin position="1"/>
        <end position="13"/>
    </location>
</feature>
<feature type="transmembrane region" description="Helical" evidence="2">
    <location>
        <begin position="14"/>
        <end position="34"/>
    </location>
</feature>
<feature type="topological domain" description="Periplasmic" evidence="2">
    <location>
        <begin position="35"/>
        <end position="44"/>
    </location>
</feature>
<feature type="transmembrane region" description="Helical" evidence="2">
    <location>
        <begin position="45"/>
        <end position="65"/>
    </location>
</feature>
<feature type="topological domain" description="Cytoplasmic" evidence="2">
    <location>
        <begin position="66"/>
        <end position="78"/>
    </location>
</feature>
<feature type="transmembrane region" description="Helical" evidence="2">
    <location>
        <begin position="79"/>
        <end position="99"/>
    </location>
</feature>
<feature type="topological domain" description="Periplasmic" evidence="2">
    <location>
        <begin position="100"/>
        <end position="101"/>
    </location>
</feature>
<feature type="transmembrane region" description="Helical" evidence="2">
    <location>
        <begin position="102"/>
        <end position="122"/>
    </location>
</feature>
<feature type="topological domain" description="Cytoplasmic" evidence="2">
    <location>
        <begin position="123"/>
        <end position="130"/>
    </location>
</feature>
<feature type="transmembrane region" description="Helical" evidence="2">
    <location>
        <begin position="131"/>
        <end position="151"/>
    </location>
</feature>
<feature type="topological domain" description="Periplasmic" evidence="2">
    <location>
        <begin position="152"/>
        <end position="156"/>
    </location>
</feature>
<feature type="transmembrane region" description="Helical" evidence="2">
    <location>
        <begin position="157"/>
        <end position="177"/>
    </location>
</feature>
<feature type="topological domain" description="Cytoplasmic" evidence="2">
    <location>
        <begin position="178"/>
        <end position="203"/>
    </location>
</feature>
<feature type="transmembrane region" description="Helical" evidence="2">
    <location>
        <begin position="204"/>
        <end position="224"/>
    </location>
</feature>
<feature type="topological domain" description="Periplasmic" evidence="2">
    <location>
        <begin position="225"/>
        <end position="234"/>
    </location>
</feature>
<feature type="transmembrane region" description="Helical" evidence="2">
    <location>
        <begin position="235"/>
        <end position="255"/>
    </location>
</feature>
<feature type="topological domain" description="Cytoplasmic" evidence="2">
    <location>
        <begin position="256"/>
        <end position="269"/>
    </location>
</feature>
<feature type="transmembrane region" description="Helical" evidence="2">
    <location>
        <begin position="270"/>
        <end position="290"/>
    </location>
</feature>
<feature type="transmembrane region" description="Helical" evidence="2">
    <location>
        <begin position="291"/>
        <end position="311"/>
    </location>
</feature>
<feature type="topological domain" description="Cytoplasmic" evidence="2">
    <location>
        <begin position="312"/>
        <end position="324"/>
    </location>
</feature>
<feature type="transmembrane region" description="Helical" evidence="2">
    <location>
        <begin position="325"/>
        <end position="345"/>
    </location>
</feature>
<feature type="topological domain" description="Periplasmic" evidence="2">
    <location>
        <begin position="346"/>
        <end position="347"/>
    </location>
</feature>
<feature type="transmembrane region" description="Helical" evidence="2">
    <location>
        <begin position="348"/>
        <end position="368"/>
    </location>
</feature>
<feature type="topological domain" description="Cytoplasmic" evidence="2">
    <location>
        <begin position="369"/>
        <end position="382"/>
    </location>
</feature>
<gene>
    <name type="primary">ycaD</name>
    <name type="ordered locus">c1037</name>
</gene>
<protein>
    <recommendedName>
        <fullName>Uncharacterized MFS-type transporter YcaD</fullName>
    </recommendedName>
</protein>
<reference key="1">
    <citation type="journal article" date="2002" name="Proc. Natl. Acad. Sci. U.S.A.">
        <title>Extensive mosaic structure revealed by the complete genome sequence of uropathogenic Escherichia coli.</title>
        <authorList>
            <person name="Welch R.A."/>
            <person name="Burland V."/>
            <person name="Plunkett G. III"/>
            <person name="Redford P."/>
            <person name="Roesch P."/>
            <person name="Rasko D."/>
            <person name="Buckles E.L."/>
            <person name="Liou S.-R."/>
            <person name="Boutin A."/>
            <person name="Hackett J."/>
            <person name="Stroud D."/>
            <person name="Mayhew G.F."/>
            <person name="Rose D.J."/>
            <person name="Zhou S."/>
            <person name="Schwartz D.C."/>
            <person name="Perna N.T."/>
            <person name="Mobley H.L.T."/>
            <person name="Donnenberg M.S."/>
            <person name="Blattner F.R."/>
        </authorList>
    </citation>
    <scope>NUCLEOTIDE SEQUENCE [LARGE SCALE GENOMIC DNA]</scope>
    <source>
        <strain>CFT073 / ATCC 700928 / UPEC</strain>
    </source>
</reference>
<keyword id="KW-0997">Cell inner membrane</keyword>
<keyword id="KW-1003">Cell membrane</keyword>
<keyword id="KW-0472">Membrane</keyword>
<keyword id="KW-1185">Reference proteome</keyword>
<keyword id="KW-0812">Transmembrane</keyword>
<keyword id="KW-1133">Transmembrane helix</keyword>
<keyword id="KW-0813">Transport</keyword>
<comment type="subcellular location">
    <subcellularLocation>
        <location evidence="1">Cell inner membrane</location>
        <topology evidence="1">Multi-pass membrane protein</topology>
    </subcellularLocation>
</comment>
<comment type="similarity">
    <text evidence="3">Belongs to the major facilitator superfamily. YcaD (TC 2.A.1.26) family.</text>
</comment>
<sequence length="382" mass="41455">MSTYTRPVMLLLSGLLLLTLAIAVLNTLVPLWLAQEHMSTWQVGVVSSSYFTGNLVGTLLTGYVIKRIGFNRSYYLASFIFAAGCAGLGLMIGFWSWLAWRFVAGIGCAMIWVVVESALMCSGTSRNRGRLLAAYMMVYYVGTFLGQLLVSKVSTELMSVLPWVTGLTLAGILPLLFTHVLNQQAENHDSTSITSMLKLRQARLGVNGCIISGIVLGSLYGLMPLYLNHKGVSNASIGFWMAVLVSAGILGQWPIGRLADKFGRLLVLRVQVFVVILGSIAMLSQAAMAPALFILGAAGFTLYPVAMAWACEKVEHHQLVAMNQALLLSYTVGSLLGPSFTAMLMQNFSDNLLFIMIASVSFIYLLMLLRNAGHTPKPVAHV</sequence>